<dbReference type="EC" id="3.6.1.23" evidence="1"/>
<dbReference type="EMBL" id="AE001439">
    <property type="protein sequence ID" value="AAD06375.1"/>
    <property type="molecule type" value="Genomic_DNA"/>
</dbReference>
<dbReference type="PIR" id="B71888">
    <property type="entry name" value="B71888"/>
</dbReference>
<dbReference type="RefSeq" id="WP_000694199.1">
    <property type="nucleotide sequence ID" value="NC_000921.1"/>
</dbReference>
<dbReference type="SMR" id="Q9ZKY3"/>
<dbReference type="KEGG" id="hpj:jhp_0799"/>
<dbReference type="PATRIC" id="fig|85963.30.peg.173"/>
<dbReference type="eggNOG" id="COG0756">
    <property type="taxonomic scope" value="Bacteria"/>
</dbReference>
<dbReference type="UniPathway" id="UPA00610">
    <property type="reaction ID" value="UER00666"/>
</dbReference>
<dbReference type="Proteomes" id="UP000000804">
    <property type="component" value="Chromosome"/>
</dbReference>
<dbReference type="GO" id="GO:0004170">
    <property type="term" value="F:dUTP diphosphatase activity"/>
    <property type="evidence" value="ECO:0007669"/>
    <property type="project" value="UniProtKB-UniRule"/>
</dbReference>
<dbReference type="GO" id="GO:0000287">
    <property type="term" value="F:magnesium ion binding"/>
    <property type="evidence" value="ECO:0007669"/>
    <property type="project" value="UniProtKB-UniRule"/>
</dbReference>
<dbReference type="GO" id="GO:0006226">
    <property type="term" value="P:dUMP biosynthetic process"/>
    <property type="evidence" value="ECO:0007669"/>
    <property type="project" value="UniProtKB-UniRule"/>
</dbReference>
<dbReference type="GO" id="GO:0046081">
    <property type="term" value="P:dUTP catabolic process"/>
    <property type="evidence" value="ECO:0007669"/>
    <property type="project" value="InterPro"/>
</dbReference>
<dbReference type="CDD" id="cd07557">
    <property type="entry name" value="trimeric_dUTPase"/>
    <property type="match status" value="1"/>
</dbReference>
<dbReference type="FunFam" id="2.70.40.10:FF:000013">
    <property type="entry name" value="Deoxyuridine 5'-triphosphate nucleotidohydrolase"/>
    <property type="match status" value="1"/>
</dbReference>
<dbReference type="Gene3D" id="2.70.40.10">
    <property type="match status" value="1"/>
</dbReference>
<dbReference type="HAMAP" id="MF_00116">
    <property type="entry name" value="dUTPase_bact"/>
    <property type="match status" value="1"/>
</dbReference>
<dbReference type="InterPro" id="IPR008181">
    <property type="entry name" value="dUTPase"/>
</dbReference>
<dbReference type="InterPro" id="IPR029054">
    <property type="entry name" value="dUTPase-like"/>
</dbReference>
<dbReference type="InterPro" id="IPR036157">
    <property type="entry name" value="dUTPase-like_sf"/>
</dbReference>
<dbReference type="InterPro" id="IPR033704">
    <property type="entry name" value="dUTPase_trimeric"/>
</dbReference>
<dbReference type="NCBIfam" id="TIGR00576">
    <property type="entry name" value="dut"/>
    <property type="match status" value="1"/>
</dbReference>
<dbReference type="NCBIfam" id="NF001862">
    <property type="entry name" value="PRK00601.1"/>
    <property type="match status" value="1"/>
</dbReference>
<dbReference type="PANTHER" id="PTHR11241">
    <property type="entry name" value="DEOXYURIDINE 5'-TRIPHOSPHATE NUCLEOTIDOHYDROLASE"/>
    <property type="match status" value="1"/>
</dbReference>
<dbReference type="PANTHER" id="PTHR11241:SF0">
    <property type="entry name" value="DEOXYURIDINE 5'-TRIPHOSPHATE NUCLEOTIDOHYDROLASE"/>
    <property type="match status" value="1"/>
</dbReference>
<dbReference type="Pfam" id="PF00692">
    <property type="entry name" value="dUTPase"/>
    <property type="match status" value="1"/>
</dbReference>
<dbReference type="SUPFAM" id="SSF51283">
    <property type="entry name" value="dUTPase-like"/>
    <property type="match status" value="1"/>
</dbReference>
<protein>
    <recommendedName>
        <fullName evidence="1">Deoxyuridine 5'-triphosphate nucleotidohydrolase</fullName>
        <shortName evidence="1">dUTPase</shortName>
        <ecNumber evidence="1">3.6.1.23</ecNumber>
    </recommendedName>
    <alternativeName>
        <fullName evidence="1">dUTP pyrophosphatase</fullName>
    </alternativeName>
</protein>
<sequence>MKIKIQKIHPNALIPKYQTEGSSGFDLHAVEEVVIKPHSVGLVRIGICLSLEVGYELQVRTRSGLALNHQVMVLNSPGTVDNDYRGEIKVILANLSDKDFKVQVGDRIAQGVVQKTYKAEFIECEQLDETSRGSGGFGSTGVSKA</sequence>
<gene>
    <name evidence="1" type="primary">dut</name>
    <name type="ordered locus">jhp_0799</name>
</gene>
<evidence type="ECO:0000255" key="1">
    <source>
        <dbReference type="HAMAP-Rule" id="MF_00116"/>
    </source>
</evidence>
<comment type="function">
    <text evidence="1">This enzyme is involved in nucleotide metabolism: it produces dUMP, the immediate precursor of thymidine nucleotides and it decreases the intracellular concentration of dUTP so that uracil cannot be incorporated into DNA.</text>
</comment>
<comment type="catalytic activity">
    <reaction evidence="1">
        <text>dUTP + H2O = dUMP + diphosphate + H(+)</text>
        <dbReference type="Rhea" id="RHEA:10248"/>
        <dbReference type="ChEBI" id="CHEBI:15377"/>
        <dbReference type="ChEBI" id="CHEBI:15378"/>
        <dbReference type="ChEBI" id="CHEBI:33019"/>
        <dbReference type="ChEBI" id="CHEBI:61555"/>
        <dbReference type="ChEBI" id="CHEBI:246422"/>
        <dbReference type="EC" id="3.6.1.23"/>
    </reaction>
</comment>
<comment type="cofactor">
    <cofactor evidence="1">
        <name>Mg(2+)</name>
        <dbReference type="ChEBI" id="CHEBI:18420"/>
    </cofactor>
</comment>
<comment type="pathway">
    <text evidence="1">Pyrimidine metabolism; dUMP biosynthesis; dUMP from dCTP (dUTP route): step 2/2.</text>
</comment>
<comment type="similarity">
    <text evidence="1">Belongs to the dUTPase family.</text>
</comment>
<organism>
    <name type="scientific">Helicobacter pylori (strain J99 / ATCC 700824)</name>
    <name type="common">Campylobacter pylori J99</name>
    <dbReference type="NCBI Taxonomy" id="85963"/>
    <lineage>
        <taxon>Bacteria</taxon>
        <taxon>Pseudomonadati</taxon>
        <taxon>Campylobacterota</taxon>
        <taxon>Epsilonproteobacteria</taxon>
        <taxon>Campylobacterales</taxon>
        <taxon>Helicobacteraceae</taxon>
        <taxon>Helicobacter</taxon>
    </lineage>
</organism>
<proteinExistence type="inferred from homology"/>
<keyword id="KW-0378">Hydrolase</keyword>
<keyword id="KW-0460">Magnesium</keyword>
<keyword id="KW-0479">Metal-binding</keyword>
<keyword id="KW-0546">Nucleotide metabolism</keyword>
<accession>Q9ZKY3</accession>
<feature type="chain" id="PRO_0000182870" description="Deoxyuridine 5'-triphosphate nucleotidohydrolase">
    <location>
        <begin position="1"/>
        <end position="145"/>
    </location>
</feature>
<feature type="binding site" evidence="1">
    <location>
        <begin position="62"/>
        <end position="64"/>
    </location>
    <ligand>
        <name>substrate</name>
    </ligand>
</feature>
<feature type="binding site" evidence="1">
    <location>
        <position position="75"/>
    </location>
    <ligand>
        <name>substrate</name>
    </ligand>
</feature>
<feature type="binding site" evidence="1">
    <location>
        <begin position="79"/>
        <end position="81"/>
    </location>
    <ligand>
        <name>substrate</name>
    </ligand>
</feature>
<feature type="binding site" evidence="1">
    <location>
        <position position="89"/>
    </location>
    <ligand>
        <name>substrate</name>
    </ligand>
</feature>
<name>DUT_HELPJ</name>
<reference key="1">
    <citation type="journal article" date="1999" name="Nature">
        <title>Genomic sequence comparison of two unrelated isolates of the human gastric pathogen Helicobacter pylori.</title>
        <authorList>
            <person name="Alm R.A."/>
            <person name="Ling L.-S.L."/>
            <person name="Moir D.T."/>
            <person name="King B.L."/>
            <person name="Brown E.D."/>
            <person name="Doig P.C."/>
            <person name="Smith D.R."/>
            <person name="Noonan B."/>
            <person name="Guild B.C."/>
            <person name="deJonge B.L."/>
            <person name="Carmel G."/>
            <person name="Tummino P.J."/>
            <person name="Caruso A."/>
            <person name="Uria-Nickelsen M."/>
            <person name="Mills D.M."/>
            <person name="Ives C."/>
            <person name="Gibson R."/>
            <person name="Merberg D."/>
            <person name="Mills S.D."/>
            <person name="Jiang Q."/>
            <person name="Taylor D.E."/>
            <person name="Vovis G.F."/>
            <person name="Trust T.J."/>
        </authorList>
    </citation>
    <scope>NUCLEOTIDE SEQUENCE [LARGE SCALE GENOMIC DNA]</scope>
    <source>
        <strain>J99 / ATCC 700824</strain>
    </source>
</reference>